<evidence type="ECO:0000255" key="1">
    <source>
        <dbReference type="HAMAP-Rule" id="MF_00460"/>
    </source>
</evidence>
<protein>
    <recommendedName>
        <fullName evidence="1">Protein RnfH</fullName>
    </recommendedName>
</protein>
<accession>B7UH66</accession>
<organism>
    <name type="scientific">Escherichia coli O127:H6 (strain E2348/69 / EPEC)</name>
    <dbReference type="NCBI Taxonomy" id="574521"/>
    <lineage>
        <taxon>Bacteria</taxon>
        <taxon>Pseudomonadati</taxon>
        <taxon>Pseudomonadota</taxon>
        <taxon>Gammaproteobacteria</taxon>
        <taxon>Enterobacterales</taxon>
        <taxon>Enterobacteriaceae</taxon>
        <taxon>Escherichia</taxon>
    </lineage>
</organism>
<name>RNFH_ECO27</name>
<feature type="chain" id="PRO_1000200177" description="Protein RnfH">
    <location>
        <begin position="1"/>
        <end position="96"/>
    </location>
</feature>
<dbReference type="EMBL" id="FM180568">
    <property type="protein sequence ID" value="CAS10454.1"/>
    <property type="molecule type" value="Genomic_DNA"/>
</dbReference>
<dbReference type="RefSeq" id="WP_001117834.1">
    <property type="nucleotide sequence ID" value="NC_011601.1"/>
</dbReference>
<dbReference type="SMR" id="B7UH66"/>
<dbReference type="KEGG" id="ecg:E2348C_2906"/>
<dbReference type="HOGENOM" id="CLU_150721_1_0_6"/>
<dbReference type="Proteomes" id="UP000008205">
    <property type="component" value="Chromosome"/>
</dbReference>
<dbReference type="Gene3D" id="3.10.20.280">
    <property type="entry name" value="RnfH-like"/>
    <property type="match status" value="1"/>
</dbReference>
<dbReference type="HAMAP" id="MF_00460">
    <property type="entry name" value="UPF0125_RnfH"/>
    <property type="match status" value="1"/>
</dbReference>
<dbReference type="InterPro" id="IPR016155">
    <property type="entry name" value="Mopterin_synth/thiamin_S_b"/>
</dbReference>
<dbReference type="InterPro" id="IPR005346">
    <property type="entry name" value="RnfH"/>
</dbReference>
<dbReference type="InterPro" id="IPR037021">
    <property type="entry name" value="RnfH_sf"/>
</dbReference>
<dbReference type="NCBIfam" id="NF002490">
    <property type="entry name" value="PRK01777.1"/>
    <property type="match status" value="1"/>
</dbReference>
<dbReference type="PANTHER" id="PTHR37483">
    <property type="entry name" value="UPF0125 PROTEIN RATB"/>
    <property type="match status" value="1"/>
</dbReference>
<dbReference type="PANTHER" id="PTHR37483:SF1">
    <property type="entry name" value="UPF0125 PROTEIN RATB"/>
    <property type="match status" value="1"/>
</dbReference>
<dbReference type="Pfam" id="PF03658">
    <property type="entry name" value="Ub-RnfH"/>
    <property type="match status" value="1"/>
</dbReference>
<dbReference type="SUPFAM" id="SSF54285">
    <property type="entry name" value="MoaD/ThiS"/>
    <property type="match status" value="1"/>
</dbReference>
<sequence length="96" mass="10815">MPGKIAVEVAYALPEKQYLQRVTLQEGATVEEAIRASGLLELRTDIDLTKNKVGIYSRPAKLSDIVHDGDRVEIYRPLIADPKELRRQRAEKSANK</sequence>
<keyword id="KW-1185">Reference proteome</keyword>
<comment type="similarity">
    <text evidence="1">Belongs to the UPF0125 (RnfH) family.</text>
</comment>
<reference key="1">
    <citation type="journal article" date="2009" name="J. Bacteriol.">
        <title>Complete genome sequence and comparative genome analysis of enteropathogenic Escherichia coli O127:H6 strain E2348/69.</title>
        <authorList>
            <person name="Iguchi A."/>
            <person name="Thomson N.R."/>
            <person name="Ogura Y."/>
            <person name="Saunders D."/>
            <person name="Ooka T."/>
            <person name="Henderson I.R."/>
            <person name="Harris D."/>
            <person name="Asadulghani M."/>
            <person name="Kurokawa K."/>
            <person name="Dean P."/>
            <person name="Kenny B."/>
            <person name="Quail M.A."/>
            <person name="Thurston S."/>
            <person name="Dougan G."/>
            <person name="Hayashi T."/>
            <person name="Parkhill J."/>
            <person name="Frankel G."/>
        </authorList>
    </citation>
    <scope>NUCLEOTIDE SEQUENCE [LARGE SCALE GENOMIC DNA]</scope>
    <source>
        <strain>E2348/69 / EPEC</strain>
    </source>
</reference>
<gene>
    <name evidence="1" type="primary">rnfH</name>
    <name type="ordered locus">E2348C_2906</name>
</gene>
<proteinExistence type="inferred from homology"/>